<keyword id="KW-0333">Golgi apparatus</keyword>
<keyword id="KW-0472">Membrane</keyword>
<keyword id="KW-0653">Protein transport</keyword>
<keyword id="KW-1185">Reference proteome</keyword>
<keyword id="KW-0813">Transport</keyword>
<evidence type="ECO:0000250" key="1"/>
<evidence type="ECO:0000256" key="2">
    <source>
        <dbReference type="SAM" id="MobiDB-lite"/>
    </source>
</evidence>
<evidence type="ECO:0000305" key="3"/>
<gene>
    <name type="primary">cogc-8</name>
    <name type="ORF">R02D3.2</name>
</gene>
<protein>
    <recommendedName>
        <fullName>Conserved oligomeric Golgi complex subunit 8</fullName>
        <shortName>COG complex subunit 8</shortName>
    </recommendedName>
    <alternativeName>
        <fullName>Component of oligomeric Golgi complex 8</fullName>
    </alternativeName>
</protein>
<reference key="1">
    <citation type="journal article" date="1998" name="Science">
        <title>Genome sequence of the nematode C. elegans: a platform for investigating biology.</title>
        <authorList>
            <consortium name="The C. elegans sequencing consortium"/>
        </authorList>
    </citation>
    <scope>NUCLEOTIDE SEQUENCE [LARGE SCALE GENOMIC DNA]</scope>
    <source>
        <strain>Bristol N2</strain>
    </source>
</reference>
<sequence length="743" mass="83844">MDSDYIFHNGDDIRNMGLEEMRRQKVLLASELKAIDAQISDLAFNNYGTYADAGRATHDCSKTFGEMRDKTVNLSDQAEELTSAFVEFRAKAKQLSEEQDLVRKALDKSNPIWELLTLPSRMDICIRAGYYDLAYTLTNYGLQLQQQTQLYRNPLIKKVADHLVEARAYLLEELFNKFAGPLDLAESIKVVNNVRKMPSLTANQLRIAVLQHRDIYLEKQILDISGNVDMIVQAIEIYRTSMYDTLVLYLAVFPENEVVRKNPNADPRWESWPVLPPNSILSQWVISNVKKMLDLITKADVKSAVDLSAVWTKLMAMASSFGRMGIDFRPLIAGKLTKLIEQRFRQNVQEATSRLTGSSRDIVMIGIDPASLPQFETAPDSPPVAAAELSLWDDMTIYTNSVVDALNGLRFILTPVVLSTVVVSLRDSIRSILTWLASSHSNSANFSRAVRIVCTSVAPFFEKCVAFFFPPATVSKIFGSSISKRQYLQFIELDMKQLAASCDGAEKIEEIVKPLLQKRTLEEIGLENVLKPTKPEEEKTKFFLEETVEDGPGLAEPQEEASESVKEQETTSELEKKHGTDFETAETQEMVSEPVKEHETTSELTKEQEPAFEPEKLHETPPEPMEPQNFGESEAKAAHNPEAHLELGETSENQEIREQEHKEVVITSTEPEFHEIDLNSAVLIPKIAVEPQLDPISEYLTELTQDDPIEEEEGWGWGDDDGEEQEISSKEVESPKEKCKKDD</sequence>
<proteinExistence type="inferred from homology"/>
<name>COG8_CAEEL</name>
<accession>O44502</accession>
<feature type="chain" id="PRO_0000213523" description="Conserved oligomeric Golgi complex subunit 8">
    <location>
        <begin position="1"/>
        <end position="743"/>
    </location>
</feature>
<feature type="region of interest" description="Disordered" evidence="2">
    <location>
        <begin position="549"/>
        <end position="672"/>
    </location>
</feature>
<feature type="region of interest" description="Disordered" evidence="2">
    <location>
        <begin position="704"/>
        <end position="743"/>
    </location>
</feature>
<feature type="compositionally biased region" description="Basic and acidic residues" evidence="2">
    <location>
        <begin position="563"/>
        <end position="581"/>
    </location>
</feature>
<feature type="compositionally biased region" description="Basic and acidic residues" evidence="2">
    <location>
        <begin position="594"/>
        <end position="621"/>
    </location>
</feature>
<feature type="compositionally biased region" description="Basic and acidic residues" evidence="2">
    <location>
        <begin position="633"/>
        <end position="647"/>
    </location>
</feature>
<feature type="compositionally biased region" description="Basic and acidic residues" evidence="2">
    <location>
        <begin position="654"/>
        <end position="664"/>
    </location>
</feature>
<feature type="compositionally biased region" description="Acidic residues" evidence="2">
    <location>
        <begin position="704"/>
        <end position="726"/>
    </location>
</feature>
<feature type="compositionally biased region" description="Basic and acidic residues" evidence="2">
    <location>
        <begin position="727"/>
        <end position="743"/>
    </location>
</feature>
<organism>
    <name type="scientific">Caenorhabditis elegans</name>
    <dbReference type="NCBI Taxonomy" id="6239"/>
    <lineage>
        <taxon>Eukaryota</taxon>
        <taxon>Metazoa</taxon>
        <taxon>Ecdysozoa</taxon>
        <taxon>Nematoda</taxon>
        <taxon>Chromadorea</taxon>
        <taxon>Rhabditida</taxon>
        <taxon>Rhabditina</taxon>
        <taxon>Rhabditomorpha</taxon>
        <taxon>Rhabditoidea</taxon>
        <taxon>Rhabditidae</taxon>
        <taxon>Peloderinae</taxon>
        <taxon>Caenorhabditis</taxon>
    </lineage>
</organism>
<comment type="function">
    <text evidence="1">Required for normal Golgi function.</text>
</comment>
<comment type="subunit">
    <text evidence="1">Component of the conserved oligomeric Golgi complex which is composed of eight different subunits and is required for normal Golgi morphology and localization.</text>
</comment>
<comment type="subcellular location">
    <subcellularLocation>
        <location evidence="1">Golgi apparatus membrane</location>
        <topology evidence="1">Peripheral membrane protein</topology>
    </subcellularLocation>
</comment>
<comment type="similarity">
    <text evidence="3">Belongs to the COG8 family.</text>
</comment>
<dbReference type="EMBL" id="FO081663">
    <property type="protein sequence ID" value="CCD73166.1"/>
    <property type="molecule type" value="Genomic_DNA"/>
</dbReference>
<dbReference type="PIR" id="T15062">
    <property type="entry name" value="T15062"/>
</dbReference>
<dbReference type="RefSeq" id="NP_499883.1">
    <property type="nucleotide sequence ID" value="NM_067482.4"/>
</dbReference>
<dbReference type="SMR" id="O44502"/>
<dbReference type="BioGRID" id="42003">
    <property type="interactions" value="5"/>
</dbReference>
<dbReference type="FunCoup" id="O44502">
    <property type="interactions" value="2779"/>
</dbReference>
<dbReference type="IntAct" id="O44502">
    <property type="interactions" value="1"/>
</dbReference>
<dbReference type="STRING" id="6239.R02D3.2.1"/>
<dbReference type="PaxDb" id="6239-R02D3.2"/>
<dbReference type="PeptideAtlas" id="O44502"/>
<dbReference type="EnsemblMetazoa" id="R02D3.2.1">
    <property type="protein sequence ID" value="R02D3.2.1"/>
    <property type="gene ID" value="WBGene00019820"/>
</dbReference>
<dbReference type="GeneID" id="176841"/>
<dbReference type="KEGG" id="cel:CELE_R02D3.2"/>
<dbReference type="UCSC" id="R02D3.2">
    <property type="organism name" value="c. elegans"/>
</dbReference>
<dbReference type="AGR" id="WB:WBGene00019820"/>
<dbReference type="CTD" id="176841"/>
<dbReference type="WormBase" id="R02D3.2">
    <property type="protein sequence ID" value="CE18096"/>
    <property type="gene ID" value="WBGene00019820"/>
    <property type="gene designation" value="cogc-8"/>
</dbReference>
<dbReference type="eggNOG" id="KOG2069">
    <property type="taxonomic scope" value="Eukaryota"/>
</dbReference>
<dbReference type="GeneTree" id="ENSGT00390000015893"/>
<dbReference type="HOGENOM" id="CLU_017968_1_0_1"/>
<dbReference type="InParanoid" id="O44502"/>
<dbReference type="OMA" id="WETWPSS"/>
<dbReference type="OrthoDB" id="1661054at2759"/>
<dbReference type="PhylomeDB" id="O44502"/>
<dbReference type="Reactome" id="R-CEL-6807878">
    <property type="pathway name" value="COPI-mediated anterograde transport"/>
</dbReference>
<dbReference type="Reactome" id="R-CEL-6811438">
    <property type="pathway name" value="Intra-Golgi traffic"/>
</dbReference>
<dbReference type="PRO" id="PR:O44502"/>
<dbReference type="Proteomes" id="UP000001940">
    <property type="component" value="Chromosome IV"/>
</dbReference>
<dbReference type="Bgee" id="WBGene00019820">
    <property type="expression patterns" value="Expressed in germ line (C elegans) and 4 other cell types or tissues"/>
</dbReference>
<dbReference type="GO" id="GO:0000139">
    <property type="term" value="C:Golgi membrane"/>
    <property type="evidence" value="ECO:0007669"/>
    <property type="project" value="UniProtKB-SubCell"/>
</dbReference>
<dbReference type="GO" id="GO:0017119">
    <property type="term" value="C:Golgi transport complex"/>
    <property type="evidence" value="ECO:0000318"/>
    <property type="project" value="GO_Central"/>
</dbReference>
<dbReference type="GO" id="GO:0035262">
    <property type="term" value="P:gonad morphogenesis"/>
    <property type="evidence" value="ECO:0000315"/>
    <property type="project" value="WormBase"/>
</dbReference>
<dbReference type="GO" id="GO:0006891">
    <property type="term" value="P:intra-Golgi vesicle-mediated transport"/>
    <property type="evidence" value="ECO:0000318"/>
    <property type="project" value="GO_Central"/>
</dbReference>
<dbReference type="GO" id="GO:0015031">
    <property type="term" value="P:protein transport"/>
    <property type="evidence" value="ECO:0007669"/>
    <property type="project" value="UniProtKB-KW"/>
</dbReference>
<dbReference type="GO" id="GO:0030334">
    <property type="term" value="P:regulation of cell migration"/>
    <property type="evidence" value="ECO:0000315"/>
    <property type="project" value="WormBase"/>
</dbReference>
<dbReference type="InterPro" id="IPR007255">
    <property type="entry name" value="COG8"/>
</dbReference>
<dbReference type="InterPro" id="IPR016159">
    <property type="entry name" value="Cullin_repeat-like_dom_sf"/>
</dbReference>
<dbReference type="PANTHER" id="PTHR21311">
    <property type="entry name" value="CONSERVED OLIGOMERIC GOLGI COMPLEX COMPONENT 8"/>
    <property type="match status" value="1"/>
</dbReference>
<dbReference type="PANTHER" id="PTHR21311:SF0">
    <property type="entry name" value="CONSERVED OLIGOMERIC GOLGI COMPLEX SUBUNIT 8"/>
    <property type="match status" value="1"/>
</dbReference>
<dbReference type="Pfam" id="PF04124">
    <property type="entry name" value="Dor1"/>
    <property type="match status" value="1"/>
</dbReference>
<dbReference type="SUPFAM" id="SSF74788">
    <property type="entry name" value="Cullin repeat-like"/>
    <property type="match status" value="1"/>
</dbReference>